<comment type="function">
    <text evidence="1">O-methyltransferase that catalyzes the 2 O-methylation steps in the ubiquinone biosynthetic pathway.</text>
</comment>
<comment type="catalytic activity">
    <reaction evidence="1">
        <text>a 3-demethylubiquinol + S-adenosyl-L-methionine = a ubiquinol + S-adenosyl-L-homocysteine + H(+)</text>
        <dbReference type="Rhea" id="RHEA:44380"/>
        <dbReference type="Rhea" id="RHEA-COMP:9566"/>
        <dbReference type="Rhea" id="RHEA-COMP:10914"/>
        <dbReference type="ChEBI" id="CHEBI:15378"/>
        <dbReference type="ChEBI" id="CHEBI:17976"/>
        <dbReference type="ChEBI" id="CHEBI:57856"/>
        <dbReference type="ChEBI" id="CHEBI:59789"/>
        <dbReference type="ChEBI" id="CHEBI:84422"/>
        <dbReference type="EC" id="2.1.1.64"/>
    </reaction>
</comment>
<comment type="catalytic activity">
    <reaction evidence="1">
        <text>a 3-(all-trans-polyprenyl)benzene-1,2-diol + S-adenosyl-L-methionine = a 2-methoxy-6-(all-trans-polyprenyl)phenol + S-adenosyl-L-homocysteine + H(+)</text>
        <dbReference type="Rhea" id="RHEA:31411"/>
        <dbReference type="Rhea" id="RHEA-COMP:9550"/>
        <dbReference type="Rhea" id="RHEA-COMP:9551"/>
        <dbReference type="ChEBI" id="CHEBI:15378"/>
        <dbReference type="ChEBI" id="CHEBI:57856"/>
        <dbReference type="ChEBI" id="CHEBI:59789"/>
        <dbReference type="ChEBI" id="CHEBI:62729"/>
        <dbReference type="ChEBI" id="CHEBI:62731"/>
        <dbReference type="EC" id="2.1.1.222"/>
    </reaction>
</comment>
<comment type="pathway">
    <text evidence="1">Cofactor biosynthesis; ubiquinone biosynthesis.</text>
</comment>
<comment type="similarity">
    <text evidence="1">Belongs to the methyltransferase superfamily. UbiG/COQ3 family.</text>
</comment>
<accession>B1IXV6</accession>
<sequence length="240" mass="26585">MNAEKSPENHNVDHEEIAKFEAVASRWWDLEGEFKPLHRINPLRLGYIAERAGGLFGKKVLDVGCGGGILAESMAREGATVTGLDMGFEPLQVAKLHALESGIQVDYVQETVEEHAAKHAGQYDVVTCMEMLEHVPDPQSVVRACAQLVKPGGDVFFSTLNRNGKSWLMAVVGAEYILRMVPKGTHDVKKFIKPAELLGWVDQTSLKERHITGLHYNPITNTFKLGPGVDVNYMLHTQNK</sequence>
<gene>
    <name evidence="1" type="primary">ubiG</name>
    <name type="ordered locus">EcolC_1419</name>
</gene>
<feature type="chain" id="PRO_1000081220" description="Ubiquinone biosynthesis O-methyltransferase">
    <location>
        <begin position="1"/>
        <end position="240"/>
    </location>
</feature>
<feature type="binding site" evidence="1">
    <location>
        <position position="44"/>
    </location>
    <ligand>
        <name>S-adenosyl-L-methionine</name>
        <dbReference type="ChEBI" id="CHEBI:59789"/>
    </ligand>
</feature>
<feature type="binding site" evidence="1">
    <location>
        <position position="64"/>
    </location>
    <ligand>
        <name>S-adenosyl-L-methionine</name>
        <dbReference type="ChEBI" id="CHEBI:59789"/>
    </ligand>
</feature>
<feature type="binding site" evidence="1">
    <location>
        <position position="85"/>
    </location>
    <ligand>
        <name>S-adenosyl-L-methionine</name>
        <dbReference type="ChEBI" id="CHEBI:59789"/>
    </ligand>
</feature>
<feature type="binding site" evidence="1">
    <location>
        <position position="129"/>
    </location>
    <ligand>
        <name>S-adenosyl-L-methionine</name>
        <dbReference type="ChEBI" id="CHEBI:59789"/>
    </ligand>
</feature>
<evidence type="ECO:0000255" key="1">
    <source>
        <dbReference type="HAMAP-Rule" id="MF_00472"/>
    </source>
</evidence>
<proteinExistence type="inferred from homology"/>
<protein>
    <recommendedName>
        <fullName evidence="1">Ubiquinone biosynthesis O-methyltransferase</fullName>
    </recommendedName>
    <alternativeName>
        <fullName evidence="1">2-octaprenyl-6-hydroxyphenol methylase</fullName>
        <ecNumber evidence="1">2.1.1.222</ecNumber>
    </alternativeName>
    <alternativeName>
        <fullName evidence="1">3-demethylubiquinone-8 3-O-methyltransferase</fullName>
        <ecNumber evidence="1">2.1.1.64</ecNumber>
    </alternativeName>
</protein>
<name>UBIG_ECOLC</name>
<reference key="1">
    <citation type="submission" date="2008-02" db="EMBL/GenBank/DDBJ databases">
        <title>Complete sequence of Escherichia coli C str. ATCC 8739.</title>
        <authorList>
            <person name="Copeland A."/>
            <person name="Lucas S."/>
            <person name="Lapidus A."/>
            <person name="Glavina del Rio T."/>
            <person name="Dalin E."/>
            <person name="Tice H."/>
            <person name="Bruce D."/>
            <person name="Goodwin L."/>
            <person name="Pitluck S."/>
            <person name="Kiss H."/>
            <person name="Brettin T."/>
            <person name="Detter J.C."/>
            <person name="Han C."/>
            <person name="Kuske C.R."/>
            <person name="Schmutz J."/>
            <person name="Larimer F."/>
            <person name="Land M."/>
            <person name="Hauser L."/>
            <person name="Kyrpides N."/>
            <person name="Mikhailova N."/>
            <person name="Ingram L."/>
            <person name="Richardson P."/>
        </authorList>
    </citation>
    <scope>NUCLEOTIDE SEQUENCE [LARGE SCALE GENOMIC DNA]</scope>
    <source>
        <strain>ATCC 8739 / DSM 1576 / NBRC 3972 / NCIMB 8545 / WDCM 00012 / Crooks</strain>
    </source>
</reference>
<keyword id="KW-0489">Methyltransferase</keyword>
<keyword id="KW-0949">S-adenosyl-L-methionine</keyword>
<keyword id="KW-0808">Transferase</keyword>
<keyword id="KW-0831">Ubiquinone biosynthesis</keyword>
<dbReference type="EC" id="2.1.1.222" evidence="1"/>
<dbReference type="EC" id="2.1.1.64" evidence="1"/>
<dbReference type="EMBL" id="CP000946">
    <property type="protein sequence ID" value="ACA77082.1"/>
    <property type="molecule type" value="Genomic_DNA"/>
</dbReference>
<dbReference type="RefSeq" id="WP_000990753.1">
    <property type="nucleotide sequence ID" value="NZ_MTFT01000028.1"/>
</dbReference>
<dbReference type="SMR" id="B1IXV6"/>
<dbReference type="KEGG" id="ecl:EcolC_1419"/>
<dbReference type="HOGENOM" id="CLU_042432_5_0_6"/>
<dbReference type="UniPathway" id="UPA00232"/>
<dbReference type="GO" id="GO:0102208">
    <property type="term" value="F:2-polyprenyl-6-hydroxyphenol methylase activity"/>
    <property type="evidence" value="ECO:0007669"/>
    <property type="project" value="UniProtKB-EC"/>
</dbReference>
<dbReference type="GO" id="GO:0061542">
    <property type="term" value="F:3-demethylubiquinol 3-O-methyltransferase activity"/>
    <property type="evidence" value="ECO:0007669"/>
    <property type="project" value="UniProtKB-UniRule"/>
</dbReference>
<dbReference type="GO" id="GO:0010420">
    <property type="term" value="F:polyprenyldihydroxybenzoate methyltransferase activity"/>
    <property type="evidence" value="ECO:0007669"/>
    <property type="project" value="InterPro"/>
</dbReference>
<dbReference type="GO" id="GO:0032259">
    <property type="term" value="P:methylation"/>
    <property type="evidence" value="ECO:0007669"/>
    <property type="project" value="UniProtKB-KW"/>
</dbReference>
<dbReference type="CDD" id="cd02440">
    <property type="entry name" value="AdoMet_MTases"/>
    <property type="match status" value="1"/>
</dbReference>
<dbReference type="FunFam" id="3.40.50.150:FF:000028">
    <property type="entry name" value="Ubiquinone biosynthesis O-methyltransferase"/>
    <property type="match status" value="1"/>
</dbReference>
<dbReference type="Gene3D" id="3.40.50.150">
    <property type="entry name" value="Vaccinia Virus protein VP39"/>
    <property type="match status" value="1"/>
</dbReference>
<dbReference type="HAMAP" id="MF_00472">
    <property type="entry name" value="UbiG"/>
    <property type="match status" value="1"/>
</dbReference>
<dbReference type="InterPro" id="IPR029063">
    <property type="entry name" value="SAM-dependent_MTases_sf"/>
</dbReference>
<dbReference type="InterPro" id="IPR010233">
    <property type="entry name" value="UbiG_MeTrfase"/>
</dbReference>
<dbReference type="NCBIfam" id="TIGR01983">
    <property type="entry name" value="UbiG"/>
    <property type="match status" value="1"/>
</dbReference>
<dbReference type="PANTHER" id="PTHR43464">
    <property type="entry name" value="METHYLTRANSFERASE"/>
    <property type="match status" value="1"/>
</dbReference>
<dbReference type="PANTHER" id="PTHR43464:SF19">
    <property type="entry name" value="UBIQUINONE BIOSYNTHESIS O-METHYLTRANSFERASE, MITOCHONDRIAL"/>
    <property type="match status" value="1"/>
</dbReference>
<dbReference type="Pfam" id="PF13489">
    <property type="entry name" value="Methyltransf_23"/>
    <property type="match status" value="1"/>
</dbReference>
<dbReference type="SUPFAM" id="SSF53335">
    <property type="entry name" value="S-adenosyl-L-methionine-dependent methyltransferases"/>
    <property type="match status" value="1"/>
</dbReference>
<organism>
    <name type="scientific">Escherichia coli (strain ATCC 8739 / DSM 1576 / NBRC 3972 / NCIMB 8545 / WDCM 00012 / Crooks)</name>
    <dbReference type="NCBI Taxonomy" id="481805"/>
    <lineage>
        <taxon>Bacteria</taxon>
        <taxon>Pseudomonadati</taxon>
        <taxon>Pseudomonadota</taxon>
        <taxon>Gammaproteobacteria</taxon>
        <taxon>Enterobacterales</taxon>
        <taxon>Enterobacteriaceae</taxon>
        <taxon>Escherichia</taxon>
    </lineage>
</organism>